<reference key="1">
    <citation type="journal article" date="2003" name="Nature">
        <title>Genome sequence of Bacillus cereus and comparative analysis with Bacillus anthracis.</title>
        <authorList>
            <person name="Ivanova N."/>
            <person name="Sorokin A."/>
            <person name="Anderson I."/>
            <person name="Galleron N."/>
            <person name="Candelon B."/>
            <person name="Kapatral V."/>
            <person name="Bhattacharyya A."/>
            <person name="Reznik G."/>
            <person name="Mikhailova N."/>
            <person name="Lapidus A."/>
            <person name="Chu L."/>
            <person name="Mazur M."/>
            <person name="Goltsman E."/>
            <person name="Larsen N."/>
            <person name="D'Souza M."/>
            <person name="Walunas T."/>
            <person name="Grechkin Y."/>
            <person name="Pusch G."/>
            <person name="Haselkorn R."/>
            <person name="Fonstein M."/>
            <person name="Ehrlich S.D."/>
            <person name="Overbeek R."/>
            <person name="Kyrpides N.C."/>
        </authorList>
    </citation>
    <scope>NUCLEOTIDE SEQUENCE [LARGE SCALE GENOMIC DNA]</scope>
    <source>
        <strain>ATCC 14579 / DSM 31 / CCUG 7414 / JCM 2152 / NBRC 15305 / NCIMB 9373 / NCTC 2599 / NRRL B-3711</strain>
    </source>
</reference>
<dbReference type="EC" id="6.1.1.21" evidence="1"/>
<dbReference type="EMBL" id="AE016877">
    <property type="protein sequence ID" value="AAP10257.1"/>
    <property type="molecule type" value="Genomic_DNA"/>
</dbReference>
<dbReference type="RefSeq" id="NP_833056.1">
    <property type="nucleotide sequence ID" value="NC_004722.1"/>
</dbReference>
<dbReference type="SMR" id="Q81B71"/>
<dbReference type="STRING" id="226900.BC_3317"/>
<dbReference type="KEGG" id="bce:BC3317"/>
<dbReference type="PATRIC" id="fig|226900.8.peg.3402"/>
<dbReference type="HOGENOM" id="CLU_025113_3_0_9"/>
<dbReference type="Proteomes" id="UP000001417">
    <property type="component" value="Chromosome"/>
</dbReference>
<dbReference type="GO" id="GO:0005737">
    <property type="term" value="C:cytoplasm"/>
    <property type="evidence" value="ECO:0007669"/>
    <property type="project" value="UniProtKB-SubCell"/>
</dbReference>
<dbReference type="GO" id="GO:0005524">
    <property type="term" value="F:ATP binding"/>
    <property type="evidence" value="ECO:0007669"/>
    <property type="project" value="UniProtKB-UniRule"/>
</dbReference>
<dbReference type="GO" id="GO:0140096">
    <property type="term" value="F:catalytic activity, acting on a protein"/>
    <property type="evidence" value="ECO:0007669"/>
    <property type="project" value="UniProtKB-ARBA"/>
</dbReference>
<dbReference type="GO" id="GO:0004821">
    <property type="term" value="F:histidine-tRNA ligase activity"/>
    <property type="evidence" value="ECO:0007669"/>
    <property type="project" value="UniProtKB-UniRule"/>
</dbReference>
<dbReference type="GO" id="GO:0016740">
    <property type="term" value="F:transferase activity"/>
    <property type="evidence" value="ECO:0007669"/>
    <property type="project" value="UniProtKB-ARBA"/>
</dbReference>
<dbReference type="GO" id="GO:0006427">
    <property type="term" value="P:histidyl-tRNA aminoacylation"/>
    <property type="evidence" value="ECO:0007669"/>
    <property type="project" value="UniProtKB-UniRule"/>
</dbReference>
<dbReference type="CDD" id="cd00773">
    <property type="entry name" value="HisRS-like_core"/>
    <property type="match status" value="1"/>
</dbReference>
<dbReference type="CDD" id="cd00859">
    <property type="entry name" value="HisRS_anticodon"/>
    <property type="match status" value="1"/>
</dbReference>
<dbReference type="FunFam" id="3.30.930.10:FF:000099">
    <property type="entry name" value="Histidine--tRNA ligase"/>
    <property type="match status" value="1"/>
</dbReference>
<dbReference type="FunFam" id="3.40.50.800:FF:000033">
    <property type="entry name" value="Histidine--tRNA ligase"/>
    <property type="match status" value="1"/>
</dbReference>
<dbReference type="Gene3D" id="3.40.50.800">
    <property type="entry name" value="Anticodon-binding domain"/>
    <property type="match status" value="1"/>
</dbReference>
<dbReference type="Gene3D" id="3.30.930.10">
    <property type="entry name" value="Bira Bifunctional Protein, Domain 2"/>
    <property type="match status" value="1"/>
</dbReference>
<dbReference type="HAMAP" id="MF_00127">
    <property type="entry name" value="His_tRNA_synth"/>
    <property type="match status" value="1"/>
</dbReference>
<dbReference type="InterPro" id="IPR006195">
    <property type="entry name" value="aa-tRNA-synth_II"/>
</dbReference>
<dbReference type="InterPro" id="IPR045864">
    <property type="entry name" value="aa-tRNA-synth_II/BPL/LPL"/>
</dbReference>
<dbReference type="InterPro" id="IPR004154">
    <property type="entry name" value="Anticodon-bd"/>
</dbReference>
<dbReference type="InterPro" id="IPR036621">
    <property type="entry name" value="Anticodon-bd_dom_sf"/>
</dbReference>
<dbReference type="InterPro" id="IPR015807">
    <property type="entry name" value="His-tRNA-ligase"/>
</dbReference>
<dbReference type="InterPro" id="IPR041715">
    <property type="entry name" value="HisRS-like_core"/>
</dbReference>
<dbReference type="InterPro" id="IPR004516">
    <property type="entry name" value="HisRS/HisZ"/>
</dbReference>
<dbReference type="InterPro" id="IPR033656">
    <property type="entry name" value="HisRS_anticodon"/>
</dbReference>
<dbReference type="NCBIfam" id="TIGR00442">
    <property type="entry name" value="hisS"/>
    <property type="match status" value="1"/>
</dbReference>
<dbReference type="NCBIfam" id="NF009085">
    <property type="entry name" value="PRK12420.1"/>
    <property type="match status" value="1"/>
</dbReference>
<dbReference type="PANTHER" id="PTHR11476:SF7">
    <property type="entry name" value="HISTIDINE--TRNA LIGASE"/>
    <property type="match status" value="1"/>
</dbReference>
<dbReference type="PANTHER" id="PTHR11476">
    <property type="entry name" value="HISTIDYL-TRNA SYNTHETASE"/>
    <property type="match status" value="1"/>
</dbReference>
<dbReference type="Pfam" id="PF03129">
    <property type="entry name" value="HGTP_anticodon"/>
    <property type="match status" value="1"/>
</dbReference>
<dbReference type="Pfam" id="PF13393">
    <property type="entry name" value="tRNA-synt_His"/>
    <property type="match status" value="1"/>
</dbReference>
<dbReference type="PIRSF" id="PIRSF001549">
    <property type="entry name" value="His-tRNA_synth"/>
    <property type="match status" value="1"/>
</dbReference>
<dbReference type="SUPFAM" id="SSF52954">
    <property type="entry name" value="Class II aaRS ABD-related"/>
    <property type="match status" value="1"/>
</dbReference>
<dbReference type="SUPFAM" id="SSF55681">
    <property type="entry name" value="Class II aaRS and biotin synthetases"/>
    <property type="match status" value="1"/>
</dbReference>
<dbReference type="PROSITE" id="PS50862">
    <property type="entry name" value="AA_TRNA_LIGASE_II"/>
    <property type="match status" value="1"/>
</dbReference>
<comment type="catalytic activity">
    <reaction evidence="1">
        <text>tRNA(His) + L-histidine + ATP = L-histidyl-tRNA(His) + AMP + diphosphate + H(+)</text>
        <dbReference type="Rhea" id="RHEA:17313"/>
        <dbReference type="Rhea" id="RHEA-COMP:9665"/>
        <dbReference type="Rhea" id="RHEA-COMP:9689"/>
        <dbReference type="ChEBI" id="CHEBI:15378"/>
        <dbReference type="ChEBI" id="CHEBI:30616"/>
        <dbReference type="ChEBI" id="CHEBI:33019"/>
        <dbReference type="ChEBI" id="CHEBI:57595"/>
        <dbReference type="ChEBI" id="CHEBI:78442"/>
        <dbReference type="ChEBI" id="CHEBI:78527"/>
        <dbReference type="ChEBI" id="CHEBI:456215"/>
        <dbReference type="EC" id="6.1.1.21"/>
    </reaction>
</comment>
<comment type="subunit">
    <text evidence="1">Homodimer.</text>
</comment>
<comment type="subcellular location">
    <subcellularLocation>
        <location evidence="1">Cytoplasm</location>
    </subcellularLocation>
</comment>
<comment type="similarity">
    <text evidence="1">Belongs to the class-II aminoacyl-tRNA synthetase family.</text>
</comment>
<feature type="chain" id="PRO_0000136097" description="Histidine--tRNA ligase 1">
    <location>
        <begin position="1"/>
        <end position="426"/>
    </location>
</feature>
<gene>
    <name evidence="1" type="primary">hisS-1</name>
    <name type="ordered locus">BC_3317</name>
</gene>
<keyword id="KW-0030">Aminoacyl-tRNA synthetase</keyword>
<keyword id="KW-0067">ATP-binding</keyword>
<keyword id="KW-0963">Cytoplasm</keyword>
<keyword id="KW-0436">Ligase</keyword>
<keyword id="KW-0547">Nucleotide-binding</keyword>
<keyword id="KW-0648">Protein biosynthesis</keyword>
<keyword id="KW-1185">Reference proteome</keyword>
<sequence>MMEMRNVKGTKDYLPEEQVLRNKIKRACEDTFERYGCKPLETPTLNMYELMSYKYGGGDEILKEIYTLQDQGKRELALRYDLTIPFAKVVAMNPNLRLPFKRYEIGKVFRDGPIKQGRFREFIQCDVDIVGVESVMAEAELMAMAFELFRTLNLEITIQYNNRKLLNGILESINIPTELTSDVILSLDKIEKIGIDGVRKDVLERGISEEMADTICNTVLSCLKLTIADFKEAFNNPLVADGVNELQQLQQYLIALGINENTIFNPFLARGLTMYTGTVYEIFLKDRSITSSIGSGGRYDNIIGAFRGDNMNYPTVGISFGLDVIYTALSQKETISSTADVFIIPLGTELQCLQIAQQLRSTTSLKVELELAGRKLKRALNYANKENIPYVLIIGEDELSTNTVVLRNMKEGSEVKVPISSLSRYL</sequence>
<accession>Q81B71</accession>
<protein>
    <recommendedName>
        <fullName evidence="1">Histidine--tRNA ligase 1</fullName>
        <ecNumber evidence="1">6.1.1.21</ecNumber>
    </recommendedName>
    <alternativeName>
        <fullName evidence="1">Histidyl-tRNA synthetase 1</fullName>
        <shortName evidence="1">HisRS 1</shortName>
    </alternativeName>
</protein>
<proteinExistence type="inferred from homology"/>
<name>SYH1_BACCR</name>
<evidence type="ECO:0000255" key="1">
    <source>
        <dbReference type="HAMAP-Rule" id="MF_00127"/>
    </source>
</evidence>
<organism>
    <name type="scientific">Bacillus cereus (strain ATCC 14579 / DSM 31 / CCUG 7414 / JCM 2152 / NBRC 15305 / NCIMB 9373 / NCTC 2599 / NRRL B-3711)</name>
    <dbReference type="NCBI Taxonomy" id="226900"/>
    <lineage>
        <taxon>Bacteria</taxon>
        <taxon>Bacillati</taxon>
        <taxon>Bacillota</taxon>
        <taxon>Bacilli</taxon>
        <taxon>Bacillales</taxon>
        <taxon>Bacillaceae</taxon>
        <taxon>Bacillus</taxon>
        <taxon>Bacillus cereus group</taxon>
    </lineage>
</organism>